<name>TYSY_AZOVD</name>
<proteinExistence type="inferred from homology"/>
<evidence type="ECO:0000255" key="1">
    <source>
        <dbReference type="HAMAP-Rule" id="MF_00008"/>
    </source>
</evidence>
<feature type="chain" id="PRO_1000201715" description="Thymidylate synthase">
    <location>
        <begin position="1"/>
        <end position="264"/>
    </location>
</feature>
<feature type="active site" description="Nucleophile" evidence="1">
    <location>
        <position position="146"/>
    </location>
</feature>
<feature type="binding site" description="in other chain" evidence="1">
    <location>
        <position position="21"/>
    </location>
    <ligand>
        <name>dUMP</name>
        <dbReference type="ChEBI" id="CHEBI:246422"/>
        <note>ligand shared between dimeric partners</note>
    </ligand>
</feature>
<feature type="binding site" evidence="1">
    <location>
        <position position="51"/>
    </location>
    <ligand>
        <name>(6R)-5,10-methylene-5,6,7,8-tetrahydrofolate</name>
        <dbReference type="ChEBI" id="CHEBI:15636"/>
    </ligand>
</feature>
<feature type="binding site" evidence="1">
    <location>
        <begin position="126"/>
        <end position="127"/>
    </location>
    <ligand>
        <name>dUMP</name>
        <dbReference type="ChEBI" id="CHEBI:246422"/>
        <note>ligand shared between dimeric partners</note>
    </ligand>
</feature>
<feature type="binding site" description="in other chain" evidence="1">
    <location>
        <begin position="166"/>
        <end position="169"/>
    </location>
    <ligand>
        <name>dUMP</name>
        <dbReference type="ChEBI" id="CHEBI:246422"/>
        <note>ligand shared between dimeric partners</note>
    </ligand>
</feature>
<feature type="binding site" evidence="1">
    <location>
        <position position="169"/>
    </location>
    <ligand>
        <name>(6R)-5,10-methylene-5,6,7,8-tetrahydrofolate</name>
        <dbReference type="ChEBI" id="CHEBI:15636"/>
    </ligand>
</feature>
<feature type="binding site" description="in other chain" evidence="1">
    <location>
        <position position="177"/>
    </location>
    <ligand>
        <name>dUMP</name>
        <dbReference type="ChEBI" id="CHEBI:246422"/>
        <note>ligand shared between dimeric partners</note>
    </ligand>
</feature>
<feature type="binding site" description="in other chain" evidence="1">
    <location>
        <begin position="207"/>
        <end position="209"/>
    </location>
    <ligand>
        <name>dUMP</name>
        <dbReference type="ChEBI" id="CHEBI:246422"/>
        <note>ligand shared between dimeric partners</note>
    </ligand>
</feature>
<feature type="binding site" evidence="1">
    <location>
        <position position="263"/>
    </location>
    <ligand>
        <name>(6R)-5,10-methylene-5,6,7,8-tetrahydrofolate</name>
        <dbReference type="ChEBI" id="CHEBI:15636"/>
    </ligand>
</feature>
<keyword id="KW-0963">Cytoplasm</keyword>
<keyword id="KW-0489">Methyltransferase</keyword>
<keyword id="KW-0545">Nucleotide biosynthesis</keyword>
<keyword id="KW-0808">Transferase</keyword>
<gene>
    <name evidence="1" type="primary">thyA</name>
    <name type="ordered locus">Avin_48170</name>
</gene>
<protein>
    <recommendedName>
        <fullName evidence="1">Thymidylate synthase</fullName>
        <shortName evidence="1">TS</shortName>
        <shortName evidence="1">TSase</shortName>
        <ecNumber evidence="1">2.1.1.45</ecNumber>
    </recommendedName>
</protein>
<accession>C1DK16</accession>
<sequence>MKQYLDLMRLVREHGTFKSDRTGTGTFSVFGHQMRFDLAEGFPLVTTKKCHLKSIVHELLWFLKGDTNIRYLKENGVSIWDEWADGNGDLGPVYGYQWRSWPAPDGRHIDQIANVVNMIRDNPDSRRLIVSAWNPALIDEMKLPPCHALFQFYVADGRLSCQLYQRSADIFLGVPFNIASYALLILMMAQVTGLAPGEFVWTGGDCHLYANHLEQADLQLSREPLPLPTMQLDPDVKDLFAFRFEDFELVGYQSHPHIKAPVAI</sequence>
<reference key="1">
    <citation type="journal article" date="2009" name="J. Bacteriol.">
        <title>Genome sequence of Azotobacter vinelandii, an obligate aerobe specialized to support diverse anaerobic metabolic processes.</title>
        <authorList>
            <person name="Setubal J.C."/>
            <person name="Dos Santos P."/>
            <person name="Goldman B.S."/>
            <person name="Ertesvaag H."/>
            <person name="Espin G."/>
            <person name="Rubio L.M."/>
            <person name="Valla S."/>
            <person name="Almeida N.F."/>
            <person name="Balasubramanian D."/>
            <person name="Cromes L."/>
            <person name="Curatti L."/>
            <person name="Du Z."/>
            <person name="Godsy E."/>
            <person name="Goodner B."/>
            <person name="Hellner-Burris K."/>
            <person name="Hernandez J.A."/>
            <person name="Houmiel K."/>
            <person name="Imperial J."/>
            <person name="Kennedy C."/>
            <person name="Larson T.J."/>
            <person name="Latreille P."/>
            <person name="Ligon L.S."/>
            <person name="Lu J."/>
            <person name="Maerk M."/>
            <person name="Miller N.M."/>
            <person name="Norton S."/>
            <person name="O'Carroll I.P."/>
            <person name="Paulsen I."/>
            <person name="Raulfs E.C."/>
            <person name="Roemer R."/>
            <person name="Rosser J."/>
            <person name="Segura D."/>
            <person name="Slater S."/>
            <person name="Stricklin S.L."/>
            <person name="Studholme D.J."/>
            <person name="Sun J."/>
            <person name="Viana C.J."/>
            <person name="Wallin E."/>
            <person name="Wang B."/>
            <person name="Wheeler C."/>
            <person name="Zhu H."/>
            <person name="Dean D.R."/>
            <person name="Dixon R."/>
            <person name="Wood D."/>
        </authorList>
    </citation>
    <scope>NUCLEOTIDE SEQUENCE [LARGE SCALE GENOMIC DNA]</scope>
    <source>
        <strain>DJ / ATCC BAA-1303</strain>
    </source>
</reference>
<organism>
    <name type="scientific">Azotobacter vinelandii (strain DJ / ATCC BAA-1303)</name>
    <dbReference type="NCBI Taxonomy" id="322710"/>
    <lineage>
        <taxon>Bacteria</taxon>
        <taxon>Pseudomonadati</taxon>
        <taxon>Pseudomonadota</taxon>
        <taxon>Gammaproteobacteria</taxon>
        <taxon>Pseudomonadales</taxon>
        <taxon>Pseudomonadaceae</taxon>
        <taxon>Azotobacter</taxon>
    </lineage>
</organism>
<comment type="function">
    <text evidence="1">Catalyzes the reductive methylation of 2'-deoxyuridine-5'-monophosphate (dUMP) to 2'-deoxythymidine-5'-monophosphate (dTMP) while utilizing 5,10-methylenetetrahydrofolate (mTHF) as the methyl donor and reductant in the reaction, yielding dihydrofolate (DHF) as a by-product. This enzymatic reaction provides an intracellular de novo source of dTMP, an essential precursor for DNA biosynthesis.</text>
</comment>
<comment type="catalytic activity">
    <reaction evidence="1">
        <text>dUMP + (6R)-5,10-methylene-5,6,7,8-tetrahydrofolate = 7,8-dihydrofolate + dTMP</text>
        <dbReference type="Rhea" id="RHEA:12104"/>
        <dbReference type="ChEBI" id="CHEBI:15636"/>
        <dbReference type="ChEBI" id="CHEBI:57451"/>
        <dbReference type="ChEBI" id="CHEBI:63528"/>
        <dbReference type="ChEBI" id="CHEBI:246422"/>
        <dbReference type="EC" id="2.1.1.45"/>
    </reaction>
</comment>
<comment type="pathway">
    <text evidence="1">Pyrimidine metabolism; dTTP biosynthesis.</text>
</comment>
<comment type="subunit">
    <text evidence="1">Homodimer.</text>
</comment>
<comment type="subcellular location">
    <subcellularLocation>
        <location evidence="1">Cytoplasm</location>
    </subcellularLocation>
</comment>
<comment type="similarity">
    <text evidence="1">Belongs to the thymidylate synthase family. Bacterial-type ThyA subfamily.</text>
</comment>
<dbReference type="EC" id="2.1.1.45" evidence="1"/>
<dbReference type="EMBL" id="CP001157">
    <property type="protein sequence ID" value="ACO80921.1"/>
    <property type="molecule type" value="Genomic_DNA"/>
</dbReference>
<dbReference type="RefSeq" id="WP_012703283.1">
    <property type="nucleotide sequence ID" value="NC_012560.1"/>
</dbReference>
<dbReference type="SMR" id="C1DK16"/>
<dbReference type="STRING" id="322710.Avin_48170"/>
<dbReference type="EnsemblBacteria" id="ACO80921">
    <property type="protein sequence ID" value="ACO80921"/>
    <property type="gene ID" value="Avin_48170"/>
</dbReference>
<dbReference type="GeneID" id="88187688"/>
<dbReference type="KEGG" id="avn:Avin_48170"/>
<dbReference type="eggNOG" id="COG0207">
    <property type="taxonomic scope" value="Bacteria"/>
</dbReference>
<dbReference type="HOGENOM" id="CLU_021669_0_0_6"/>
<dbReference type="OrthoDB" id="9774633at2"/>
<dbReference type="UniPathway" id="UPA00575"/>
<dbReference type="Proteomes" id="UP000002424">
    <property type="component" value="Chromosome"/>
</dbReference>
<dbReference type="GO" id="GO:0005829">
    <property type="term" value="C:cytosol"/>
    <property type="evidence" value="ECO:0007669"/>
    <property type="project" value="TreeGrafter"/>
</dbReference>
<dbReference type="GO" id="GO:0004799">
    <property type="term" value="F:thymidylate synthase activity"/>
    <property type="evidence" value="ECO:0007669"/>
    <property type="project" value="UniProtKB-UniRule"/>
</dbReference>
<dbReference type="GO" id="GO:0006231">
    <property type="term" value="P:dTMP biosynthetic process"/>
    <property type="evidence" value="ECO:0007669"/>
    <property type="project" value="UniProtKB-UniRule"/>
</dbReference>
<dbReference type="GO" id="GO:0006235">
    <property type="term" value="P:dTTP biosynthetic process"/>
    <property type="evidence" value="ECO:0007669"/>
    <property type="project" value="UniProtKB-UniRule"/>
</dbReference>
<dbReference type="GO" id="GO:0032259">
    <property type="term" value="P:methylation"/>
    <property type="evidence" value="ECO:0007669"/>
    <property type="project" value="UniProtKB-KW"/>
</dbReference>
<dbReference type="CDD" id="cd00351">
    <property type="entry name" value="TS_Pyrimidine_HMase"/>
    <property type="match status" value="1"/>
</dbReference>
<dbReference type="FunFam" id="3.30.572.10:FF:000001">
    <property type="entry name" value="Thymidylate synthase"/>
    <property type="match status" value="1"/>
</dbReference>
<dbReference type="Gene3D" id="3.30.572.10">
    <property type="entry name" value="Thymidylate synthase/dCMP hydroxymethylase domain"/>
    <property type="match status" value="1"/>
</dbReference>
<dbReference type="HAMAP" id="MF_00008">
    <property type="entry name" value="Thymidy_synth_bact"/>
    <property type="match status" value="1"/>
</dbReference>
<dbReference type="InterPro" id="IPR045097">
    <property type="entry name" value="Thymidate_synth/dCMP_Mease"/>
</dbReference>
<dbReference type="InterPro" id="IPR023451">
    <property type="entry name" value="Thymidate_synth/dCMP_Mease_dom"/>
</dbReference>
<dbReference type="InterPro" id="IPR036926">
    <property type="entry name" value="Thymidate_synth/dCMP_Mease_sf"/>
</dbReference>
<dbReference type="InterPro" id="IPR000398">
    <property type="entry name" value="Thymidylate_synthase"/>
</dbReference>
<dbReference type="InterPro" id="IPR020940">
    <property type="entry name" value="Thymidylate_synthase_AS"/>
</dbReference>
<dbReference type="NCBIfam" id="NF002497">
    <property type="entry name" value="PRK01827.1-3"/>
    <property type="match status" value="1"/>
</dbReference>
<dbReference type="NCBIfam" id="NF002499">
    <property type="entry name" value="PRK01827.1-5"/>
    <property type="match status" value="1"/>
</dbReference>
<dbReference type="NCBIfam" id="TIGR03284">
    <property type="entry name" value="thym_sym"/>
    <property type="match status" value="2"/>
</dbReference>
<dbReference type="PANTHER" id="PTHR11548:SF9">
    <property type="entry name" value="THYMIDYLATE SYNTHASE"/>
    <property type="match status" value="1"/>
</dbReference>
<dbReference type="PANTHER" id="PTHR11548">
    <property type="entry name" value="THYMIDYLATE SYNTHASE 1"/>
    <property type="match status" value="1"/>
</dbReference>
<dbReference type="Pfam" id="PF00303">
    <property type="entry name" value="Thymidylat_synt"/>
    <property type="match status" value="1"/>
</dbReference>
<dbReference type="PRINTS" id="PR00108">
    <property type="entry name" value="THYMDSNTHASE"/>
</dbReference>
<dbReference type="SUPFAM" id="SSF55831">
    <property type="entry name" value="Thymidylate synthase/dCMP hydroxymethylase"/>
    <property type="match status" value="1"/>
</dbReference>
<dbReference type="PROSITE" id="PS00091">
    <property type="entry name" value="THYMIDYLATE_SYNTHASE"/>
    <property type="match status" value="1"/>
</dbReference>